<proteinExistence type="evidence at protein level"/>
<organism>
    <name type="scientific">Homo sapiens</name>
    <name type="common">Human</name>
    <dbReference type="NCBI Taxonomy" id="9606"/>
    <lineage>
        <taxon>Eukaryota</taxon>
        <taxon>Metazoa</taxon>
        <taxon>Chordata</taxon>
        <taxon>Craniata</taxon>
        <taxon>Vertebrata</taxon>
        <taxon>Euteleostomi</taxon>
        <taxon>Mammalia</taxon>
        <taxon>Eutheria</taxon>
        <taxon>Euarchontoglires</taxon>
        <taxon>Primates</taxon>
        <taxon>Haplorrhini</taxon>
        <taxon>Catarrhini</taxon>
        <taxon>Hominidae</taxon>
        <taxon>Homo</taxon>
    </lineage>
</organism>
<keyword id="KW-0002">3D-structure</keyword>
<keyword id="KW-0025">Alternative splicing</keyword>
<keyword id="KW-0040">ANK repeat</keyword>
<keyword id="KW-0227">DNA damage</keyword>
<keyword id="KW-0234">DNA repair</keyword>
<keyword id="KW-1017">Isopeptide bond</keyword>
<keyword id="KW-0479">Metal-binding</keyword>
<keyword id="KW-0539">Nucleus</keyword>
<keyword id="KW-0597">Phosphoprotein</keyword>
<keyword id="KW-1267">Proteomics identification</keyword>
<keyword id="KW-1185">Reference proteome</keyword>
<keyword id="KW-0677">Repeat</keyword>
<keyword id="KW-0808">Transferase</keyword>
<keyword id="KW-0832">Ubl conjugation</keyword>
<keyword id="KW-0833">Ubl conjugation pathway</keyword>
<keyword id="KW-0862">Zinc</keyword>
<keyword id="KW-0863">Zinc-finger</keyword>
<protein>
    <recommendedName>
        <fullName>BRCA1-associated RING domain protein 1</fullName>
        <shortName>BARD-1</shortName>
        <ecNumber evidence="5 10">2.3.2.27</ecNumber>
    </recommendedName>
    <alternativeName>
        <fullName evidence="13">RING-type E3 ubiquitin transferase BARD1</fullName>
    </alternativeName>
</protein>
<reference key="1">
    <citation type="journal article" date="1996" name="Nat. Genet.">
        <title>Identification of a RING protein that can interact in vivo with the BRCA1 gene product.</title>
        <authorList>
            <person name="Wu L.C."/>
            <person name="Wang Z.W."/>
            <person name="Tsan J.T."/>
            <person name="Spillman M.A."/>
            <person name="Phung A."/>
            <person name="Xu X.L."/>
            <person name="Yang M.-C.W."/>
            <person name="Hwang L.-Y."/>
            <person name="Bowcock A.M."/>
            <person name="Baer R."/>
        </authorList>
    </citation>
    <scope>NUCLEOTIDE SEQUENCE [MRNA] (ISOFORM 1)</scope>
    <scope>CHARACTERIZATION</scope>
    <source>
        <tissue>B-cell</tissue>
    </source>
</reference>
<reference key="2">
    <citation type="journal article" date="1998" name="Hum. Mol. Genet.">
        <title>Mutations in the BRCA1-associated RING domain (BARD1) gene in primary breast, ovarian and uterine cancers.</title>
        <authorList>
            <person name="Thai T.H."/>
            <person name="Du F."/>
            <person name="Tsan J.T."/>
            <person name="Jin Y."/>
            <person name="Phung A."/>
            <person name="Spillman M.A."/>
            <person name="Massa H.F."/>
            <person name="Muller C.Y."/>
            <person name="Ashfaq R."/>
            <person name="Mathis J.M."/>
            <person name="Miller D.S."/>
            <person name="Trask B.J."/>
            <person name="Baer R."/>
            <person name="Bowcock A.M."/>
        </authorList>
    </citation>
    <scope>NUCLEOTIDE SEQUENCE [GENOMIC DNA]</scope>
    <scope>VARIANTS SER-24; GLU-153; SER-378; MET-507; SER-557; HIS-564; CYS-658; LEU-695 AND ASN-761</scope>
</reference>
<reference key="3">
    <citation type="journal article" date="2007" name="Cancer Res.">
        <title>Oncogenic BARD1 isoforms expressed in gynecological cancers.</title>
        <authorList>
            <person name="Li L."/>
            <person name="Ryser S."/>
            <person name="Dizin E."/>
            <person name="Pils D."/>
            <person name="Krainer M."/>
            <person name="Jefford C.E."/>
            <person name="Bertoni F."/>
            <person name="Zeillinger R."/>
            <person name="Irminger-Finger I."/>
        </authorList>
    </citation>
    <scope>NUCLEOTIDE SEQUENCE [MRNA] (ISOFORMS ALPHA; BETA AND GAMMA)</scope>
    <scope>ALTERNATIVE SPLICING</scope>
</reference>
<reference key="4">
    <citation type="journal article" date="2005" name="Nature">
        <title>Generation and annotation of the DNA sequences of human chromosomes 2 and 4.</title>
        <authorList>
            <person name="Hillier L.W."/>
            <person name="Graves T.A."/>
            <person name="Fulton R.S."/>
            <person name="Fulton L.A."/>
            <person name="Pepin K.H."/>
            <person name="Minx P."/>
            <person name="Wagner-McPherson C."/>
            <person name="Layman D."/>
            <person name="Wylie K."/>
            <person name="Sekhon M."/>
            <person name="Becker M.C."/>
            <person name="Fewell G.A."/>
            <person name="Delehaunty K.D."/>
            <person name="Miner T.L."/>
            <person name="Nash W.E."/>
            <person name="Kremitzki C."/>
            <person name="Oddy L."/>
            <person name="Du H."/>
            <person name="Sun H."/>
            <person name="Bradshaw-Cordum H."/>
            <person name="Ali J."/>
            <person name="Carter J."/>
            <person name="Cordes M."/>
            <person name="Harris A."/>
            <person name="Isak A."/>
            <person name="van Brunt A."/>
            <person name="Nguyen C."/>
            <person name="Du F."/>
            <person name="Courtney L."/>
            <person name="Kalicki J."/>
            <person name="Ozersky P."/>
            <person name="Abbott S."/>
            <person name="Armstrong J."/>
            <person name="Belter E.A."/>
            <person name="Caruso L."/>
            <person name="Cedroni M."/>
            <person name="Cotton M."/>
            <person name="Davidson T."/>
            <person name="Desai A."/>
            <person name="Elliott G."/>
            <person name="Erb T."/>
            <person name="Fronick C."/>
            <person name="Gaige T."/>
            <person name="Haakenson W."/>
            <person name="Haglund K."/>
            <person name="Holmes A."/>
            <person name="Harkins R."/>
            <person name="Kim K."/>
            <person name="Kruchowski S.S."/>
            <person name="Strong C.M."/>
            <person name="Grewal N."/>
            <person name="Goyea E."/>
            <person name="Hou S."/>
            <person name="Levy A."/>
            <person name="Martinka S."/>
            <person name="Mead K."/>
            <person name="McLellan M.D."/>
            <person name="Meyer R."/>
            <person name="Randall-Maher J."/>
            <person name="Tomlinson C."/>
            <person name="Dauphin-Kohlberg S."/>
            <person name="Kozlowicz-Reilly A."/>
            <person name="Shah N."/>
            <person name="Swearengen-Shahid S."/>
            <person name="Snider J."/>
            <person name="Strong J.T."/>
            <person name="Thompson J."/>
            <person name="Yoakum M."/>
            <person name="Leonard S."/>
            <person name="Pearman C."/>
            <person name="Trani L."/>
            <person name="Radionenko M."/>
            <person name="Waligorski J.E."/>
            <person name="Wang C."/>
            <person name="Rock S.M."/>
            <person name="Tin-Wollam A.-M."/>
            <person name="Maupin R."/>
            <person name="Latreille P."/>
            <person name="Wendl M.C."/>
            <person name="Yang S.-P."/>
            <person name="Pohl C."/>
            <person name="Wallis J.W."/>
            <person name="Spieth J."/>
            <person name="Bieri T.A."/>
            <person name="Berkowicz N."/>
            <person name="Nelson J.O."/>
            <person name="Osborne J."/>
            <person name="Ding L."/>
            <person name="Meyer R."/>
            <person name="Sabo A."/>
            <person name="Shotland Y."/>
            <person name="Sinha P."/>
            <person name="Wohldmann P.E."/>
            <person name="Cook L.L."/>
            <person name="Hickenbotham M.T."/>
            <person name="Eldred J."/>
            <person name="Williams D."/>
            <person name="Jones T.A."/>
            <person name="She X."/>
            <person name="Ciccarelli F.D."/>
            <person name="Izaurralde E."/>
            <person name="Taylor J."/>
            <person name="Schmutz J."/>
            <person name="Myers R.M."/>
            <person name="Cox D.R."/>
            <person name="Huang X."/>
            <person name="McPherson J.D."/>
            <person name="Mardis E.R."/>
            <person name="Clifton S.W."/>
            <person name="Warren W.C."/>
            <person name="Chinwalla A.T."/>
            <person name="Eddy S.R."/>
            <person name="Marra M.A."/>
            <person name="Ovcharenko I."/>
            <person name="Furey T.S."/>
            <person name="Miller W."/>
            <person name="Eichler E.E."/>
            <person name="Bork P."/>
            <person name="Suyama M."/>
            <person name="Torrents D."/>
            <person name="Waterston R.H."/>
            <person name="Wilson R.K."/>
        </authorList>
    </citation>
    <scope>NUCLEOTIDE SEQUENCE [LARGE SCALE GENOMIC DNA]</scope>
</reference>
<reference key="5">
    <citation type="journal article" date="2004" name="Genome Res.">
        <title>The status, quality, and expansion of the NIH full-length cDNA project: the Mammalian Gene Collection (MGC).</title>
        <authorList>
            <consortium name="The MGC Project Team"/>
        </authorList>
    </citation>
    <scope>NUCLEOTIDE SEQUENCE [LARGE SCALE MRNA] (ISOFORM 1)</scope>
    <source>
        <tissue>Brain</tissue>
    </source>
</reference>
<reference key="6">
    <citation type="journal article" date="1999" name="J. Biol. Chem.">
        <title>Mapping the functional domains of BRCA1. Interaction of the ring finger domains of BRCA1 and BARD1.</title>
        <authorList>
            <person name="Meza J.E."/>
            <person name="Brzovic P.S."/>
            <person name="King M.-C."/>
            <person name="Klevit R.E."/>
        </authorList>
    </citation>
    <scope>DOMAINS</scope>
</reference>
<reference key="7">
    <citation type="journal article" date="1999" name="Science">
        <title>Functional interaction of BRCA1-associated BARD1 with polyadenylation factor CstF-50.</title>
        <authorList>
            <person name="Kleiman F.E."/>
            <person name="Manley J.L."/>
        </authorList>
    </citation>
    <scope>POSSIBLE FUNCTION</scope>
</reference>
<reference key="8">
    <citation type="journal article" date="2003" name="J. Biol. Chem.">
        <title>The BRCA1/BARD1 heterodimer assembles polyubiquitin chains through an unconventional linkage involving lysine residue K6 of ubiquitin.</title>
        <authorList>
            <person name="Wu-Baer F."/>
            <person name="Lagrazon K."/>
            <person name="Yuan W."/>
            <person name="Baer R."/>
        </authorList>
    </citation>
    <scope>FUNCTION</scope>
    <scope>CATALYTIC ACTIVITY</scope>
    <scope>INTERACTION WITH BRCA1</scope>
</reference>
<reference key="9">
    <citation type="journal article" date="2004" name="Hum. Mol. Genet.">
        <title>BRCA1:BARD1 induces the formation of conjugated ubiquitin structures, dependent on K6 of ubiquitin, in cells during DNA replication and repair.</title>
        <authorList>
            <person name="Morris J.R."/>
            <person name="Solomon E."/>
        </authorList>
    </citation>
    <scope>FUNCTION</scope>
    <scope>INTERACTION WITH BRCA1</scope>
</reference>
<reference key="10">
    <citation type="journal article" date="2007" name="Nat. Struct. Mol. Biol.">
        <title>CCDC98 is a BRCA1-BRCT domain-binding protein involved in the DNA damage response.</title>
        <authorList>
            <person name="Kim H."/>
            <person name="Huang J."/>
            <person name="Chen J."/>
        </authorList>
    </citation>
    <scope>IDENTIFICATION IN THE BRCA1-A COMPLEX</scope>
</reference>
<reference key="11">
    <citation type="journal article" date="2008" name="Proc. Natl. Acad. Sci. U.S.A.">
        <title>A quantitative atlas of mitotic phosphorylation.</title>
        <authorList>
            <person name="Dephoure N."/>
            <person name="Zhou C."/>
            <person name="Villen J."/>
            <person name="Beausoleil S.A."/>
            <person name="Bakalarski C.E."/>
            <person name="Elledge S.J."/>
            <person name="Gygi S.P."/>
        </authorList>
    </citation>
    <scope>PHOSPHORYLATION [LARGE SCALE ANALYSIS] AT SER-391 AND THR-394</scope>
    <scope>IDENTIFICATION BY MASS SPECTROMETRY [LARGE SCALE ANALYSIS]</scope>
    <source>
        <tissue>Cervix carcinoma</tissue>
    </source>
</reference>
<reference key="12">
    <citation type="journal article" date="2009" name="Anal. Chem.">
        <title>Lys-N and trypsin cover complementary parts of the phosphoproteome in a refined SCX-based approach.</title>
        <authorList>
            <person name="Gauci S."/>
            <person name="Helbig A.O."/>
            <person name="Slijper M."/>
            <person name="Krijgsveld J."/>
            <person name="Heck A.J."/>
            <person name="Mohammed S."/>
        </authorList>
    </citation>
    <scope>IDENTIFICATION BY MASS SPECTROMETRY [LARGE SCALE ANALYSIS]</scope>
</reference>
<reference key="13">
    <citation type="journal article" date="2009" name="Genes Dev.">
        <title>NBA1, a new player in the Brca1 A complex, is required for DNA damage resistance and checkpoint control.</title>
        <authorList>
            <person name="Wang B."/>
            <person name="Hurov K."/>
            <person name="Hofmann K."/>
            <person name="Elledge S.J."/>
        </authorList>
    </citation>
    <scope>IDENTIFICATION IN THE BRCA1-A COMPLEX</scope>
</reference>
<reference key="14">
    <citation type="journal article" date="2009" name="Sci. Signal.">
        <title>Quantitative phosphoproteomic analysis of T cell receptor signaling reveals system-wide modulation of protein-protein interactions.</title>
        <authorList>
            <person name="Mayya V."/>
            <person name="Lundgren D.H."/>
            <person name="Hwang S.-I."/>
            <person name="Rezaul K."/>
            <person name="Wu L."/>
            <person name="Eng J.K."/>
            <person name="Rodionov V."/>
            <person name="Han D.K."/>
        </authorList>
    </citation>
    <scope>IDENTIFICATION BY MASS SPECTROMETRY [LARGE SCALE ANALYSIS]</scope>
    <source>
        <tissue>Leukemic T-cell</tissue>
    </source>
</reference>
<reference key="15">
    <citation type="journal article" date="2010" name="Mol. Cell. Biol.">
        <title>The UBXN1 protein associates with autoubiquitinated forms of the BRCA1 tumor suppressor and inhibits its enzymatic function.</title>
        <authorList>
            <person name="Wu-Baer F."/>
            <person name="Ludwig T."/>
            <person name="Baer R."/>
        </authorList>
    </citation>
    <scope>FUNCTION</scope>
    <scope>CATALYTIC ACTIVITY</scope>
    <scope>INTERACTION WITH BRCA1</scope>
</reference>
<reference key="16">
    <citation type="journal article" date="2013" name="J. Proteome Res.">
        <title>Toward a comprehensive characterization of a human cancer cell phosphoproteome.</title>
        <authorList>
            <person name="Zhou H."/>
            <person name="Di Palma S."/>
            <person name="Preisinger C."/>
            <person name="Peng M."/>
            <person name="Polat A.N."/>
            <person name="Heck A.J."/>
            <person name="Mohammed S."/>
        </authorList>
    </citation>
    <scope>PHOSPHORYLATION [LARGE SCALE ANALYSIS] AT SER-186 AND THR-299</scope>
    <scope>IDENTIFICATION BY MASS SPECTROMETRY [LARGE SCALE ANALYSIS]</scope>
    <source>
        <tissue>Cervix carcinoma</tissue>
        <tissue>Erythroleukemia</tissue>
    </source>
</reference>
<reference key="17">
    <citation type="journal article" date="2015" name="Mol. Cell. Proteomics">
        <title>System-wide analysis of SUMOylation dynamics in response to replication stress reveals novel small ubiquitin-like modified target proteins and acceptor lysines relevant for genome stability.</title>
        <authorList>
            <person name="Xiao Z."/>
            <person name="Chang J.G."/>
            <person name="Hendriks I.A."/>
            <person name="Sigurdsson J.O."/>
            <person name="Olsen J.V."/>
            <person name="Vertegaal A.C."/>
        </authorList>
    </citation>
    <scope>SUMOYLATION [LARGE SCALE ANALYSIS] AT LYS-170</scope>
    <scope>IDENTIFICATION BY MASS SPECTROMETRY [LARGE SCALE ANALYSIS]</scope>
</reference>
<reference key="18">
    <citation type="journal article" date="2017" name="Nat. Struct. Mol. Biol.">
        <title>Site-specific mapping of the human SUMO proteome reveals co-modification with phosphorylation.</title>
        <authorList>
            <person name="Hendriks I.A."/>
            <person name="Lyon D."/>
            <person name="Young C."/>
            <person name="Jensen L.J."/>
            <person name="Vertegaal A.C."/>
            <person name="Nielsen M.L."/>
        </authorList>
    </citation>
    <scope>SUMOYLATION [LARGE SCALE ANALYSIS] AT LYS-160; LYS-170; LYS-423 AND LYS-548</scope>
    <scope>IDENTIFICATION BY MASS SPECTROMETRY [LARGE SCALE ANALYSIS]</scope>
</reference>
<reference key="19">
    <citation type="journal article" date="2001" name="Nat. Struct. Biol.">
        <title>Structure of a BRCA1-BARD1 heterodimeric RING-RING complex.</title>
        <authorList>
            <person name="Brzovic P.S."/>
            <person name="Rajagopal P."/>
            <person name="Hoyt D.W."/>
            <person name="King M.C."/>
            <person name="Klevit R.E."/>
        </authorList>
    </citation>
    <scope>STRUCTURE BY NMR OF 26-140 IN COMPLEX WITH BRCA1 AND ZINC IONS</scope>
    <scope>SUBUNIT</scope>
</reference>
<reference key="20">
    <citation type="journal article" date="2007" name="Biochemistry">
        <title>Crystal structure of the BARD1 BRCT domains.</title>
        <authorList>
            <person name="Birrane G."/>
            <person name="Varma A.K."/>
            <person name="Soni A."/>
            <person name="Ladias J.A."/>
        </authorList>
    </citation>
    <scope>X-RAY CRYSTALLOGRAPHY (1.9 ANGSTROMS) OF 568-777</scope>
</reference>
<reference key="21">
    <citation type="journal article" date="2008" name="Biochemistry">
        <title>The BARD1 C-terminal domain structure and interactions with polyadenylation factor CstF-50.</title>
        <authorList>
            <person name="Edwards R.A."/>
            <person name="Lee M.S."/>
            <person name="Tsutakawa S.E."/>
            <person name="Williams R.S."/>
            <person name="Nazeer I."/>
            <person name="Kleiman F.E."/>
            <person name="Tainer J.A."/>
            <person name="Glover J.N."/>
        </authorList>
    </citation>
    <scope>X-RAY CRYSTALLOGRAPHY (2.1 ANGSTROMS) OF 569-777</scope>
    <scope>INTERACTION WITH CSTF1</scope>
    <scope>DOMAIN STRUCTURE</scope>
    <scope>IDENTIFICATION BY MASS SPECTROMETRY</scope>
</reference>
<reference key="22">
    <citation type="journal article" date="2008" name="J. Biol. Chem.">
        <title>Crystal structure of the BARD1 ankyrin repeat domain and its functional consequences.</title>
        <authorList>
            <person name="Fox D. III"/>
            <person name="Le Trong I."/>
            <person name="Rajagopal P."/>
            <person name="Brzovic P.S."/>
            <person name="Stenkamp R.E."/>
            <person name="Klevit R.E."/>
        </authorList>
    </citation>
    <scope>X-RAY CRYSTALLOGRAPHY (2.0 ANGSTROMS) OF 425-555</scope>
    <scope>IDENTIFICATION BY MASS SPECTROMETRY</scope>
    <scope>DOMAINS ANK REPEATS</scope>
    <scope>DOMAIN STRUCTURE</scope>
</reference>
<dbReference type="EC" id="2.3.2.27" evidence="5 10"/>
<dbReference type="EMBL" id="U76638">
    <property type="protein sequence ID" value="AAB38316.1"/>
    <property type="molecule type" value="mRNA"/>
</dbReference>
<dbReference type="EMBL" id="AF038042">
    <property type="protein sequence ID" value="AAB99978.1"/>
    <property type="molecule type" value="Genomic_DNA"/>
</dbReference>
<dbReference type="EMBL" id="AF038034">
    <property type="protein sequence ID" value="AAB99978.1"/>
    <property type="status" value="JOINED"/>
    <property type="molecule type" value="Genomic_DNA"/>
</dbReference>
<dbReference type="EMBL" id="AF038035">
    <property type="protein sequence ID" value="AAB99978.1"/>
    <property type="status" value="JOINED"/>
    <property type="molecule type" value="Genomic_DNA"/>
</dbReference>
<dbReference type="EMBL" id="AF038036">
    <property type="protein sequence ID" value="AAB99978.1"/>
    <property type="status" value="JOINED"/>
    <property type="molecule type" value="Genomic_DNA"/>
</dbReference>
<dbReference type="EMBL" id="AF038037">
    <property type="protein sequence ID" value="AAB99978.1"/>
    <property type="status" value="JOINED"/>
    <property type="molecule type" value="Genomic_DNA"/>
</dbReference>
<dbReference type="EMBL" id="AF038038">
    <property type="protein sequence ID" value="AAB99978.1"/>
    <property type="status" value="JOINED"/>
    <property type="molecule type" value="Genomic_DNA"/>
</dbReference>
<dbReference type="EMBL" id="AF038039">
    <property type="protein sequence ID" value="AAB99978.1"/>
    <property type="status" value="JOINED"/>
    <property type="molecule type" value="Genomic_DNA"/>
</dbReference>
<dbReference type="EMBL" id="AF038040">
    <property type="protein sequence ID" value="AAB99978.1"/>
    <property type="status" value="JOINED"/>
    <property type="molecule type" value="Genomic_DNA"/>
</dbReference>
<dbReference type="EMBL" id="AF038041">
    <property type="protein sequence ID" value="AAB99978.1"/>
    <property type="status" value="JOINED"/>
    <property type="molecule type" value="Genomic_DNA"/>
</dbReference>
<dbReference type="EMBL" id="JF790280">
    <property type="protein sequence ID" value="AEF57471.1"/>
    <property type="molecule type" value="mRNA"/>
</dbReference>
<dbReference type="EMBL" id="JF790281">
    <property type="protein sequence ID" value="AEF57472.1"/>
    <property type="molecule type" value="mRNA"/>
</dbReference>
<dbReference type="EMBL" id="JF790282">
    <property type="protein sequence ID" value="AEF57473.1"/>
    <property type="molecule type" value="mRNA"/>
</dbReference>
<dbReference type="EMBL" id="AC016708">
    <property type="protein sequence ID" value="AAX93130.1"/>
    <property type="molecule type" value="Genomic_DNA"/>
</dbReference>
<dbReference type="EMBL" id="BC126426">
    <property type="protein sequence ID" value="AAI26427.1"/>
    <property type="molecule type" value="mRNA"/>
</dbReference>
<dbReference type="CCDS" id="CCDS2397.1">
    <molecule id="Q99728-1"/>
</dbReference>
<dbReference type="CCDS" id="CCDS74646.1">
    <molecule id="Q99728-2"/>
</dbReference>
<dbReference type="RefSeq" id="NP_000456.2">
    <molecule id="Q99728-1"/>
    <property type="nucleotide sequence ID" value="NM_000465.4"/>
</dbReference>
<dbReference type="RefSeq" id="NP_001269472.1">
    <molecule id="Q99728-2"/>
    <property type="nucleotide sequence ID" value="NM_001282543.2"/>
</dbReference>
<dbReference type="PDB" id="1JM7">
    <property type="method" value="NMR"/>
    <property type="chains" value="B=26-140"/>
</dbReference>
<dbReference type="PDB" id="2NTE">
    <property type="method" value="X-ray"/>
    <property type="resolution" value="1.90 A"/>
    <property type="chains" value="A/B=568-777"/>
</dbReference>
<dbReference type="PDB" id="2R1Z">
    <property type="method" value="X-ray"/>
    <property type="resolution" value="2.10 A"/>
    <property type="chains" value="A/B=569-777"/>
</dbReference>
<dbReference type="PDB" id="3C5R">
    <property type="method" value="X-ray"/>
    <property type="resolution" value="2.00 A"/>
    <property type="chains" value="A/B=425-555"/>
</dbReference>
<dbReference type="PDB" id="3FA2">
    <property type="method" value="X-ray"/>
    <property type="resolution" value="2.20 A"/>
    <property type="chains" value="A/B=566-777"/>
</dbReference>
<dbReference type="PDB" id="6M14">
    <property type="method" value="X-ray"/>
    <property type="resolution" value="1.88 A"/>
    <property type="chains" value="A/B=568-777"/>
</dbReference>
<dbReference type="PDB" id="7E8I">
    <property type="method" value="EM"/>
    <property type="resolution" value="3.10 A"/>
    <property type="chains" value="K=425-777"/>
</dbReference>
<dbReference type="PDB" id="7JZV">
    <property type="method" value="EM"/>
    <property type="resolution" value="3.90 A"/>
    <property type="chains" value="B=26-140"/>
</dbReference>
<dbReference type="PDB" id="7LYB">
    <property type="method" value="EM"/>
    <property type="resolution" value="3.28 A"/>
    <property type="chains" value="N=26-122"/>
</dbReference>
<dbReference type="PDB" id="7LYC">
    <property type="method" value="EM"/>
    <property type="resolution" value="2.94 A"/>
    <property type="chains" value="N=415-777"/>
</dbReference>
<dbReference type="PDB" id="8GRQ">
    <property type="method" value="EM"/>
    <property type="resolution" value="3.87 A"/>
    <property type="chains" value="M=26-117"/>
</dbReference>
<dbReference type="PDBsum" id="1JM7"/>
<dbReference type="PDBsum" id="2NTE"/>
<dbReference type="PDBsum" id="2R1Z"/>
<dbReference type="PDBsum" id="3C5R"/>
<dbReference type="PDBsum" id="3FA2"/>
<dbReference type="PDBsum" id="6M14"/>
<dbReference type="PDBsum" id="7E8I"/>
<dbReference type="PDBsum" id="7JZV"/>
<dbReference type="PDBsum" id="7LYB"/>
<dbReference type="PDBsum" id="7LYC"/>
<dbReference type="PDBsum" id="8GRQ"/>
<dbReference type="EMDB" id="EMD-22581"/>
<dbReference type="EMDB" id="EMD-23591"/>
<dbReference type="EMDB" id="EMD-23592"/>
<dbReference type="EMDB" id="EMD-31020"/>
<dbReference type="EMDB" id="EMD-34212"/>
<dbReference type="EMDB" id="EMD-6340"/>
<dbReference type="EMDB" id="EMD-6400"/>
<dbReference type="SMR" id="Q99728"/>
<dbReference type="BioGRID" id="107056">
    <property type="interactions" value="325"/>
</dbReference>
<dbReference type="ComplexPortal" id="CPX-715">
    <property type="entry name" value="BRCA1-BARD1 complex"/>
</dbReference>
<dbReference type="ComplexPortal" id="CPX-955">
    <property type="entry name" value="BRCC E3 ubiquitin ligase complex"/>
</dbReference>
<dbReference type="CORUM" id="Q99728"/>
<dbReference type="DIP" id="DIP-5972N"/>
<dbReference type="FunCoup" id="Q99728">
    <property type="interactions" value="1110"/>
</dbReference>
<dbReference type="IntAct" id="Q99728">
    <property type="interactions" value="61"/>
</dbReference>
<dbReference type="MINT" id="Q99728"/>
<dbReference type="STRING" id="9606.ENSP00000260947"/>
<dbReference type="BindingDB" id="Q99728"/>
<dbReference type="GlyGen" id="Q99728">
    <property type="glycosylation" value="2 sites, 1 O-linked glycan (1 site)"/>
</dbReference>
<dbReference type="iPTMnet" id="Q99728"/>
<dbReference type="PhosphoSitePlus" id="Q99728"/>
<dbReference type="BioMuta" id="BARD1"/>
<dbReference type="DMDM" id="116241265"/>
<dbReference type="jPOST" id="Q99728"/>
<dbReference type="MassIVE" id="Q99728"/>
<dbReference type="PaxDb" id="9606-ENSP00000260947"/>
<dbReference type="PeptideAtlas" id="Q99728"/>
<dbReference type="ProteomicsDB" id="78442">
    <molecule id="Q99728-1"/>
</dbReference>
<dbReference type="Pumba" id="Q99728"/>
<dbReference type="Antibodypedia" id="20039">
    <property type="antibodies" value="288 antibodies from 35 providers"/>
</dbReference>
<dbReference type="DNASU" id="580"/>
<dbReference type="Ensembl" id="ENST00000260947.9">
    <molecule id="Q99728-1"/>
    <property type="protein sequence ID" value="ENSP00000260947.4"/>
    <property type="gene ID" value="ENSG00000138376.11"/>
</dbReference>
<dbReference type="Ensembl" id="ENST00000617164.5">
    <molecule id="Q99728-2"/>
    <property type="protein sequence ID" value="ENSP00000480470.1"/>
    <property type="gene ID" value="ENSG00000138376.11"/>
</dbReference>
<dbReference type="Ensembl" id="ENST00000620057.4">
    <molecule id="Q99728-4"/>
    <property type="protein sequence ID" value="ENSP00000481988.1"/>
    <property type="gene ID" value="ENSG00000138376.11"/>
</dbReference>
<dbReference type="GeneID" id="580"/>
<dbReference type="KEGG" id="hsa:580"/>
<dbReference type="MANE-Select" id="ENST00000260947.9">
    <property type="protein sequence ID" value="ENSP00000260947.4"/>
    <property type="RefSeq nucleotide sequence ID" value="NM_000465.4"/>
    <property type="RefSeq protein sequence ID" value="NP_000456.2"/>
</dbReference>
<dbReference type="UCSC" id="uc002veu.4">
    <molecule id="Q99728-1"/>
    <property type="organism name" value="human"/>
</dbReference>
<dbReference type="AGR" id="HGNC:952"/>
<dbReference type="CTD" id="580"/>
<dbReference type="DisGeNET" id="580"/>
<dbReference type="GeneCards" id="BARD1"/>
<dbReference type="HGNC" id="HGNC:952">
    <property type="gene designation" value="BARD1"/>
</dbReference>
<dbReference type="HPA" id="ENSG00000138376">
    <property type="expression patterns" value="Low tissue specificity"/>
</dbReference>
<dbReference type="MalaCards" id="BARD1"/>
<dbReference type="MIM" id="601593">
    <property type="type" value="gene"/>
</dbReference>
<dbReference type="neXtProt" id="NX_Q99728"/>
<dbReference type="OpenTargets" id="ENSG00000138376"/>
<dbReference type="Orphanet" id="145">
    <property type="disease" value="Hereditary breast and/or ovarian cancer syndrome"/>
</dbReference>
<dbReference type="PharmGKB" id="PA25256"/>
<dbReference type="VEuPathDB" id="HostDB:ENSG00000138376"/>
<dbReference type="eggNOG" id="KOG0504">
    <property type="taxonomic scope" value="Eukaryota"/>
</dbReference>
<dbReference type="eggNOG" id="KOG4362">
    <property type="taxonomic scope" value="Eukaryota"/>
</dbReference>
<dbReference type="GeneTree" id="ENSGT00940000156532"/>
<dbReference type="HOGENOM" id="CLU_021642_0_0_1"/>
<dbReference type="InParanoid" id="Q99728"/>
<dbReference type="OMA" id="LGQCEHV"/>
<dbReference type="OrthoDB" id="2384350at2759"/>
<dbReference type="PAN-GO" id="Q99728">
    <property type="GO annotations" value="4 GO annotations based on evolutionary models"/>
</dbReference>
<dbReference type="PhylomeDB" id="Q99728"/>
<dbReference type="TreeFam" id="TF326440"/>
<dbReference type="BRENDA" id="2.3.2.27">
    <property type="organism ID" value="2681"/>
</dbReference>
<dbReference type="PathwayCommons" id="Q99728"/>
<dbReference type="Reactome" id="R-HSA-5685938">
    <property type="pathway name" value="HDR through Single Strand Annealing (SSA)"/>
</dbReference>
<dbReference type="Reactome" id="R-HSA-5685942">
    <property type="pathway name" value="HDR through Homologous Recombination (HRR)"/>
</dbReference>
<dbReference type="Reactome" id="R-HSA-5689603">
    <property type="pathway name" value="UCH proteinases"/>
</dbReference>
<dbReference type="Reactome" id="R-HSA-5689901">
    <property type="pathway name" value="Metalloprotease DUBs"/>
</dbReference>
<dbReference type="Reactome" id="R-HSA-5693554">
    <property type="pathway name" value="Resolution of D-loop Structures through Synthesis-Dependent Strand Annealing (SDSA)"/>
</dbReference>
<dbReference type="Reactome" id="R-HSA-5693565">
    <property type="pathway name" value="Recruitment and ATM-mediated phosphorylation of repair and signaling proteins at DNA double strand breaks"/>
</dbReference>
<dbReference type="Reactome" id="R-HSA-5693568">
    <property type="pathway name" value="Resolution of D-loop Structures through Holliday Junction Intermediates"/>
</dbReference>
<dbReference type="Reactome" id="R-HSA-5693571">
    <property type="pathway name" value="Nonhomologous End-Joining (NHEJ)"/>
</dbReference>
<dbReference type="Reactome" id="R-HSA-5693579">
    <property type="pathway name" value="Homologous DNA Pairing and Strand Exchange"/>
</dbReference>
<dbReference type="Reactome" id="R-HSA-5693607">
    <property type="pathway name" value="Processing of DNA double-strand break ends"/>
</dbReference>
<dbReference type="Reactome" id="R-HSA-5693616">
    <property type="pathway name" value="Presynaptic phase of homologous DNA pairing and strand exchange"/>
</dbReference>
<dbReference type="Reactome" id="R-HSA-6804756">
    <property type="pathway name" value="Regulation of TP53 Activity through Phosphorylation"/>
</dbReference>
<dbReference type="Reactome" id="R-HSA-69473">
    <property type="pathway name" value="G2/M DNA damage checkpoint"/>
</dbReference>
<dbReference type="Reactome" id="R-HSA-9663199">
    <property type="pathway name" value="Defective DNA double strand break response due to BRCA1 loss of function"/>
</dbReference>
<dbReference type="Reactome" id="R-HSA-9699150">
    <property type="pathway name" value="Defective DNA double strand break response due to BARD1 loss of function"/>
</dbReference>
<dbReference type="Reactome" id="R-HSA-9701192">
    <property type="pathway name" value="Defective homologous recombination repair (HRR) due to BRCA1 loss of function"/>
</dbReference>
<dbReference type="Reactome" id="R-HSA-9704331">
    <property type="pathway name" value="Defective HDR through Homologous Recombination Repair (HRR) due to PALB2 loss of BRCA1 binding function"/>
</dbReference>
<dbReference type="Reactome" id="R-HSA-9704646">
    <property type="pathway name" value="Defective HDR through Homologous Recombination Repair (HRR) due to PALB2 loss of BRCA2/RAD51/RAD51C binding function"/>
</dbReference>
<dbReference type="Reactome" id="R-HSA-9709570">
    <property type="pathway name" value="Impaired BRCA2 binding to RAD51"/>
</dbReference>
<dbReference type="Reactome" id="R-HSA-9709603">
    <property type="pathway name" value="Impaired BRCA2 binding to PALB2"/>
</dbReference>
<dbReference type="SignaLink" id="Q99728"/>
<dbReference type="SIGNOR" id="Q99728"/>
<dbReference type="UniPathway" id="UPA00143"/>
<dbReference type="BioGRID-ORCS" id="580">
    <property type="hits" value="517 hits in 1215 CRISPR screens"/>
</dbReference>
<dbReference type="CD-CODE" id="8C2F96ED">
    <property type="entry name" value="Centrosome"/>
</dbReference>
<dbReference type="ChiTaRS" id="BARD1">
    <property type="organism name" value="human"/>
</dbReference>
<dbReference type="EvolutionaryTrace" id="Q99728"/>
<dbReference type="GeneWiki" id="BARD1"/>
<dbReference type="GenomeRNAi" id="580"/>
<dbReference type="Pharos" id="Q99728">
    <property type="development level" value="Tbio"/>
</dbReference>
<dbReference type="PRO" id="PR:Q99728"/>
<dbReference type="Proteomes" id="UP000005640">
    <property type="component" value="Chromosome 2"/>
</dbReference>
<dbReference type="RNAct" id="Q99728">
    <property type="molecule type" value="protein"/>
</dbReference>
<dbReference type="Bgee" id="ENSG00000138376">
    <property type="expression patterns" value="Expressed in secondary oocyte and 204 other cell types or tissues"/>
</dbReference>
<dbReference type="ExpressionAtlas" id="Q99728">
    <property type="expression patterns" value="baseline and differential"/>
</dbReference>
<dbReference type="GO" id="GO:0070531">
    <property type="term" value="C:BRCA1-A complex"/>
    <property type="evidence" value="ECO:0000314"/>
    <property type="project" value="UniProtKB"/>
</dbReference>
<dbReference type="GO" id="GO:0070532">
    <property type="term" value="C:BRCA1-B complex"/>
    <property type="evidence" value="ECO:0000353"/>
    <property type="project" value="ComplexPortal"/>
</dbReference>
<dbReference type="GO" id="GO:0031436">
    <property type="term" value="C:BRCA1-BARD1 complex"/>
    <property type="evidence" value="ECO:0000314"/>
    <property type="project" value="UniProtKB"/>
</dbReference>
<dbReference type="GO" id="GO:0070533">
    <property type="term" value="C:BRCA1-C complex"/>
    <property type="evidence" value="ECO:0000353"/>
    <property type="project" value="ComplexPortal"/>
</dbReference>
<dbReference type="GO" id="GO:0005737">
    <property type="term" value="C:cytoplasm"/>
    <property type="evidence" value="ECO:0000314"/>
    <property type="project" value="UniProtKB"/>
</dbReference>
<dbReference type="GO" id="GO:0036464">
    <property type="term" value="C:cytoplasmic ribonucleoprotein granule"/>
    <property type="evidence" value="ECO:0000314"/>
    <property type="project" value="HPA"/>
</dbReference>
<dbReference type="GO" id="GO:0016607">
    <property type="term" value="C:nuclear speck"/>
    <property type="evidence" value="ECO:0000314"/>
    <property type="project" value="HPA"/>
</dbReference>
<dbReference type="GO" id="GO:0000152">
    <property type="term" value="C:nuclear ubiquitin ligase complex"/>
    <property type="evidence" value="ECO:0000314"/>
    <property type="project" value="ComplexPortal"/>
</dbReference>
<dbReference type="GO" id="GO:0005654">
    <property type="term" value="C:nucleoplasm"/>
    <property type="evidence" value="ECO:0000314"/>
    <property type="project" value="HPA"/>
</dbReference>
<dbReference type="GO" id="GO:0005634">
    <property type="term" value="C:nucleus"/>
    <property type="evidence" value="ECO:0000314"/>
    <property type="project" value="UniProtKB"/>
</dbReference>
<dbReference type="GO" id="GO:0000151">
    <property type="term" value="C:ubiquitin ligase complex"/>
    <property type="evidence" value="ECO:0000303"/>
    <property type="project" value="UniProtKB"/>
</dbReference>
<dbReference type="GO" id="GO:0140863">
    <property type="term" value="F:histone H2AK127 ubiquitin ligase activity"/>
    <property type="evidence" value="ECO:0000304"/>
    <property type="project" value="ARUK-UCL"/>
</dbReference>
<dbReference type="GO" id="GO:0140864">
    <property type="term" value="F:histone H2AK129 ubiquitin ligase activity"/>
    <property type="evidence" value="ECO:0000304"/>
    <property type="project" value="ARUK-UCL"/>
</dbReference>
<dbReference type="GO" id="GO:0019900">
    <property type="term" value="F:kinase binding"/>
    <property type="evidence" value="ECO:0000303"/>
    <property type="project" value="UniProtKB"/>
</dbReference>
<dbReference type="GO" id="GO:0046982">
    <property type="term" value="F:protein heterodimerization activity"/>
    <property type="evidence" value="ECO:0000353"/>
    <property type="project" value="UniProtKB"/>
</dbReference>
<dbReference type="GO" id="GO:0042803">
    <property type="term" value="F:protein homodimerization activity"/>
    <property type="evidence" value="ECO:0000353"/>
    <property type="project" value="UniProtKB"/>
</dbReference>
<dbReference type="GO" id="GO:0003723">
    <property type="term" value="F:RNA binding"/>
    <property type="evidence" value="ECO:0000314"/>
    <property type="project" value="MGI"/>
</dbReference>
<dbReference type="GO" id="GO:0061649">
    <property type="term" value="F:ubiquitin-modified histone reader activity"/>
    <property type="evidence" value="ECO:0000304"/>
    <property type="project" value="ARUK-UCL"/>
</dbReference>
<dbReference type="GO" id="GO:0004842">
    <property type="term" value="F:ubiquitin-protein transferase activity"/>
    <property type="evidence" value="ECO:0000303"/>
    <property type="project" value="UniProtKB"/>
</dbReference>
<dbReference type="GO" id="GO:0008270">
    <property type="term" value="F:zinc ion binding"/>
    <property type="evidence" value="ECO:0007669"/>
    <property type="project" value="UniProtKB-KW"/>
</dbReference>
<dbReference type="GO" id="GO:0071479">
    <property type="term" value="P:cellular response to ionizing radiation"/>
    <property type="evidence" value="ECO:0000315"/>
    <property type="project" value="ComplexPortal"/>
</dbReference>
<dbReference type="GO" id="GO:0006338">
    <property type="term" value="P:chromatin remodeling"/>
    <property type="evidence" value="ECO:0000304"/>
    <property type="project" value="ARUK-UCL"/>
</dbReference>
<dbReference type="GO" id="GO:0006974">
    <property type="term" value="P:DNA damage response"/>
    <property type="evidence" value="ECO:0000303"/>
    <property type="project" value="UniProtKB"/>
</dbReference>
<dbReference type="GO" id="GO:0006281">
    <property type="term" value="P:DNA repair"/>
    <property type="evidence" value="ECO:0000303"/>
    <property type="project" value="ComplexPortal"/>
</dbReference>
<dbReference type="GO" id="GO:0110025">
    <property type="term" value="P:DNA strand resection involved in replication fork processing"/>
    <property type="evidence" value="ECO:0000303"/>
    <property type="project" value="ComplexPortal"/>
</dbReference>
<dbReference type="GO" id="GO:0035825">
    <property type="term" value="P:homologous recombination"/>
    <property type="evidence" value="ECO:0000303"/>
    <property type="project" value="ComplexPortal"/>
</dbReference>
<dbReference type="GO" id="GO:0044818">
    <property type="term" value="P:mitotic G2/M transition checkpoint"/>
    <property type="evidence" value="ECO:0000303"/>
    <property type="project" value="ComplexPortal"/>
</dbReference>
<dbReference type="GO" id="GO:0043066">
    <property type="term" value="P:negative regulation of apoptotic process"/>
    <property type="evidence" value="ECO:0000315"/>
    <property type="project" value="UniProtKB"/>
</dbReference>
<dbReference type="GO" id="GO:0045786">
    <property type="term" value="P:negative regulation of cell cycle"/>
    <property type="evidence" value="ECO:0000303"/>
    <property type="project" value="ComplexPortal"/>
</dbReference>
<dbReference type="GO" id="GO:0031441">
    <property type="term" value="P:negative regulation of mRNA 3'-end processing"/>
    <property type="evidence" value="ECO:0000303"/>
    <property type="project" value="UniProtKB"/>
</dbReference>
<dbReference type="GO" id="GO:0046826">
    <property type="term" value="P:negative regulation of protein export from nucleus"/>
    <property type="evidence" value="ECO:0000314"/>
    <property type="project" value="UniProtKB"/>
</dbReference>
<dbReference type="GO" id="GO:0043065">
    <property type="term" value="P:positive regulation of apoptotic process"/>
    <property type="evidence" value="ECO:0000315"/>
    <property type="project" value="UniProtKB"/>
</dbReference>
<dbReference type="GO" id="GO:0045732">
    <property type="term" value="P:positive regulation of protein catabolic process"/>
    <property type="evidence" value="ECO:0000303"/>
    <property type="project" value="UniProtKB"/>
</dbReference>
<dbReference type="GO" id="GO:0085020">
    <property type="term" value="P:protein K6-linked ubiquitination"/>
    <property type="evidence" value="ECO:0000314"/>
    <property type="project" value="UniProtKB"/>
</dbReference>
<dbReference type="GO" id="GO:0016567">
    <property type="term" value="P:protein ubiquitination"/>
    <property type="evidence" value="ECO:0000303"/>
    <property type="project" value="UniProtKB"/>
</dbReference>
<dbReference type="GO" id="GO:0051726">
    <property type="term" value="P:regulation of cell cycle"/>
    <property type="evidence" value="ECO:0000303"/>
    <property type="project" value="UniProtKB"/>
</dbReference>
<dbReference type="GO" id="GO:2000001">
    <property type="term" value="P:regulation of DNA damage checkpoint"/>
    <property type="evidence" value="ECO:0000303"/>
    <property type="project" value="ComplexPortal"/>
</dbReference>
<dbReference type="GO" id="GO:0006282">
    <property type="term" value="P:regulation of DNA repair"/>
    <property type="evidence" value="ECO:0000303"/>
    <property type="project" value="ComplexPortal"/>
</dbReference>
<dbReference type="GO" id="GO:0042325">
    <property type="term" value="P:regulation of phosphorylation"/>
    <property type="evidence" value="ECO:0000315"/>
    <property type="project" value="UniProtKB"/>
</dbReference>
<dbReference type="GO" id="GO:0006357">
    <property type="term" value="P:regulation of transcription by RNA polymerase II"/>
    <property type="evidence" value="ECO:0000304"/>
    <property type="project" value="ARUK-UCL"/>
</dbReference>
<dbReference type="GO" id="GO:0001894">
    <property type="term" value="P:tissue homeostasis"/>
    <property type="evidence" value="ECO:0000304"/>
    <property type="project" value="UniProtKB"/>
</dbReference>
<dbReference type="CDD" id="cd17734">
    <property type="entry name" value="BRCT_Bard1_rpt1"/>
    <property type="match status" value="1"/>
</dbReference>
<dbReference type="CDD" id="cd17720">
    <property type="entry name" value="BRCT_Bard1_rpt2"/>
    <property type="match status" value="1"/>
</dbReference>
<dbReference type="CDD" id="cd16496">
    <property type="entry name" value="RING-HC_BARD1"/>
    <property type="match status" value="1"/>
</dbReference>
<dbReference type="FunFam" id="1.25.40.20:FF:000032">
    <property type="entry name" value="BCL-6 corepressor isoform X1"/>
    <property type="match status" value="1"/>
</dbReference>
<dbReference type="FunFam" id="3.30.40.10:FF:000349">
    <property type="entry name" value="BRCA1 associated RING domain 1"/>
    <property type="match status" value="1"/>
</dbReference>
<dbReference type="FunFam" id="3.40.50.10190:FF:000013">
    <property type="entry name" value="BRCA1 associated RING domain 1"/>
    <property type="match status" value="1"/>
</dbReference>
<dbReference type="FunFam" id="3.40.50.10190:FF:000019">
    <property type="entry name" value="BRCA1 associated RING domain 1"/>
    <property type="match status" value="1"/>
</dbReference>
<dbReference type="Gene3D" id="1.25.40.20">
    <property type="entry name" value="Ankyrin repeat-containing domain"/>
    <property type="match status" value="1"/>
</dbReference>
<dbReference type="Gene3D" id="3.40.50.10190">
    <property type="entry name" value="BRCT domain"/>
    <property type="match status" value="2"/>
</dbReference>
<dbReference type="Gene3D" id="3.30.40.10">
    <property type="entry name" value="Zinc/RING finger domain, C3HC4 (zinc finger)"/>
    <property type="match status" value="1"/>
</dbReference>
<dbReference type="InterPro" id="IPR002110">
    <property type="entry name" value="Ankyrin_rpt"/>
</dbReference>
<dbReference type="InterPro" id="IPR036770">
    <property type="entry name" value="Ankyrin_rpt-contain_sf"/>
</dbReference>
<dbReference type="InterPro" id="IPR039503">
    <property type="entry name" value="BARD1_Znf-RING"/>
</dbReference>
<dbReference type="InterPro" id="IPR001357">
    <property type="entry name" value="BRCT_dom"/>
</dbReference>
<dbReference type="InterPro" id="IPR036420">
    <property type="entry name" value="BRCT_dom_sf"/>
</dbReference>
<dbReference type="InterPro" id="IPR001841">
    <property type="entry name" value="Znf_RING"/>
</dbReference>
<dbReference type="InterPro" id="IPR013083">
    <property type="entry name" value="Znf_RING/FYVE/PHD"/>
</dbReference>
<dbReference type="InterPro" id="IPR017907">
    <property type="entry name" value="Znf_RING_CS"/>
</dbReference>
<dbReference type="PANTHER" id="PTHR24171">
    <property type="entry name" value="ANKYRIN REPEAT DOMAIN-CONTAINING PROTEIN 39-RELATED"/>
    <property type="match status" value="1"/>
</dbReference>
<dbReference type="PANTHER" id="PTHR24171:SF8">
    <property type="entry name" value="BRCA1-ASSOCIATED RING DOMAIN PROTEIN 1"/>
    <property type="match status" value="1"/>
</dbReference>
<dbReference type="Pfam" id="PF12796">
    <property type="entry name" value="Ank_2"/>
    <property type="match status" value="1"/>
</dbReference>
<dbReference type="Pfam" id="PF00533">
    <property type="entry name" value="BRCT"/>
    <property type="match status" value="1"/>
</dbReference>
<dbReference type="Pfam" id="PF14835">
    <property type="entry name" value="zf-RING_6"/>
    <property type="match status" value="1"/>
</dbReference>
<dbReference type="PRINTS" id="PR01415">
    <property type="entry name" value="ANKYRIN"/>
</dbReference>
<dbReference type="SMART" id="SM00248">
    <property type="entry name" value="ANK"/>
    <property type="match status" value="3"/>
</dbReference>
<dbReference type="SMART" id="SM00292">
    <property type="entry name" value="BRCT"/>
    <property type="match status" value="2"/>
</dbReference>
<dbReference type="SUPFAM" id="SSF48403">
    <property type="entry name" value="Ankyrin repeat"/>
    <property type="match status" value="1"/>
</dbReference>
<dbReference type="SUPFAM" id="SSF52113">
    <property type="entry name" value="BRCT domain"/>
    <property type="match status" value="2"/>
</dbReference>
<dbReference type="SUPFAM" id="SSF57850">
    <property type="entry name" value="RING/U-box"/>
    <property type="match status" value="1"/>
</dbReference>
<dbReference type="PROSITE" id="PS50297">
    <property type="entry name" value="ANK_REP_REGION"/>
    <property type="match status" value="1"/>
</dbReference>
<dbReference type="PROSITE" id="PS50088">
    <property type="entry name" value="ANK_REPEAT"/>
    <property type="match status" value="3"/>
</dbReference>
<dbReference type="PROSITE" id="PS50172">
    <property type="entry name" value="BRCT"/>
    <property type="match status" value="2"/>
</dbReference>
<dbReference type="PROSITE" id="PS00518">
    <property type="entry name" value="ZF_RING_1"/>
    <property type="match status" value="1"/>
</dbReference>
<dbReference type="PROSITE" id="PS50089">
    <property type="entry name" value="ZF_RING_2"/>
    <property type="match status" value="1"/>
</dbReference>
<name>BARD1_HUMAN</name>
<sequence>MPDNRQPRNRQPRIRSGNEPRSAPAMEPDGRGAWAHSRAALDRLEKLLRCSRCTNILREPVCLGGCEHIFCSNCVSDCIGTGCPVCYTPAWIQDLKINRQLDSMIQLCSKLRNLLHDNELSDLKEDKPRKSLFNDAGNKKNSIKMWFSPRSKKVRYVVSKASVQTQPAIKKDASAQQDSYEFVSPSPPADVSERAKKASARSGKKQKKKTLAEINQKWNLEAEKEDGEFDSKEESKQKLVSFCSQPSVISSPQINGEIDLLASGSLTESECFGSLTEVSLPLAEQIESPDTKSRNEVVTPEKVCKNYLTSKKSLPLENNGKRGHHNRLSSPISKRCRTSILSTSGDFVKQTVPSENIPLPECSSPPSCKRKVGGTSGRKNSNMSDEFISLSPGTPPSTLSSSSYRRVMSSPSAMKLLPNMAVKRNHRGETLLHIASIKGDIPSVEYLLQNGSDPNVKDHAGWTPLHEACNHGHLKVVELLLQHKALVNTTGYQNDSPLHDAAKNGHVDIVKLLLSYGASRNAVNIFGLRPVDYTDDESMKSLLLLPEKNESSSASHCSVMNTGQRRDGPLVLIGSGLSSEQQKMLSELAVILKAKKYTEFDSTVTHVVVPGDAVQSTLKCMLGILNGCWILKFEWVKACLRRKVCEQEEKYEIPEGPRRSRLNREQLLPKLFDGCYFYLWGTFKHHPKDNLIKLVTAGGGQILSRKPKPDSDVTQTINTVAYHARPDSDQRFCTQYIIYEDLCNYHPERVRQGKVWKAPSSWFIDCVMSFELLPLDS</sequence>
<gene>
    <name type="primary">BARD1</name>
</gene>
<evidence type="ECO:0000255" key="1">
    <source>
        <dbReference type="PROSITE-ProRule" id="PRU00033"/>
    </source>
</evidence>
<evidence type="ECO:0000255" key="2">
    <source>
        <dbReference type="PROSITE-ProRule" id="PRU00175"/>
    </source>
</evidence>
<evidence type="ECO:0000256" key="3">
    <source>
        <dbReference type="SAM" id="MobiDB-lite"/>
    </source>
</evidence>
<evidence type="ECO:0000269" key="4">
    <source>
    </source>
</evidence>
<evidence type="ECO:0000269" key="5">
    <source>
    </source>
</evidence>
<evidence type="ECO:0000269" key="6">
    <source>
    </source>
</evidence>
<evidence type="ECO:0000269" key="7">
    <source>
    </source>
</evidence>
<evidence type="ECO:0000269" key="8">
    <source>
    </source>
</evidence>
<evidence type="ECO:0000269" key="9">
    <source>
    </source>
</evidence>
<evidence type="ECO:0000269" key="10">
    <source>
    </source>
</evidence>
<evidence type="ECO:0000269" key="11">
    <source>
    </source>
</evidence>
<evidence type="ECO:0000303" key="12">
    <source>
    </source>
</evidence>
<evidence type="ECO:0000305" key="13"/>
<evidence type="ECO:0007744" key="14">
    <source>
    </source>
</evidence>
<evidence type="ECO:0007744" key="15">
    <source>
    </source>
</evidence>
<evidence type="ECO:0007744" key="16">
    <source>
    </source>
</evidence>
<evidence type="ECO:0007744" key="17">
    <source>
    </source>
</evidence>
<evidence type="ECO:0007829" key="18">
    <source>
        <dbReference type="PDB" id="2NTE"/>
    </source>
</evidence>
<evidence type="ECO:0007829" key="19">
    <source>
        <dbReference type="PDB" id="3C5R"/>
    </source>
</evidence>
<evidence type="ECO:0007829" key="20">
    <source>
        <dbReference type="PDB" id="6M14"/>
    </source>
</evidence>
<evidence type="ECO:0007829" key="21">
    <source>
        <dbReference type="PDB" id="7LYB"/>
    </source>
</evidence>
<evidence type="ECO:0007829" key="22">
    <source>
        <dbReference type="PDB" id="7LYC"/>
    </source>
</evidence>
<comment type="function">
    <text evidence="5 6 10">E3 ubiquitin-protein ligase. The BRCA1-BARD1 heterodimer specifically mediates the formation of 'Lys-6'-linked polyubiquitin chains and coordinates a diverse range of cellular pathways such as DNA damage repair, ubiquitination and transcriptional regulation to maintain genomic stability. Plays a central role in the control of the cell cycle in response to DNA damage. Acts by mediating ubiquitin E3 ligase activity that is required for its tumor suppressor function. Also forms a heterodimer with CSTF1/CSTF-50 to modulate mRNA processing and RNAP II stability by inhibiting pre-mRNA 3' cleavage.</text>
</comment>
<comment type="catalytic activity">
    <reaction evidence="5 10">
        <text>S-ubiquitinyl-[E2 ubiquitin-conjugating enzyme]-L-cysteine + [acceptor protein]-L-lysine = [E2 ubiquitin-conjugating enzyme]-L-cysteine + N(6)-ubiquitinyl-[acceptor protein]-L-lysine.</text>
        <dbReference type="EC" id="2.3.2.27"/>
    </reaction>
</comment>
<comment type="pathway">
    <text>Protein modification; protein ubiquitination.</text>
</comment>
<comment type="subunit">
    <text evidence="4 5 6 7 8 9 10">Homo- and heterodimer. Heterodimer (RING-type zinc finger) with BRCA1. Heterodimer (via ANK repeats and BRCT domains) with CSTF1/CSTF-50. Component of the BRCA1-A complex, at least composed of the BRCA1, BARD1, UIMC1/RAP80, ABRAXAS1, BRCC3/BRCC36, BABAM2 and BABAM1/NBA1. Interacts with UBXN1.</text>
</comment>
<comment type="interaction">
    <interactant intactId="EBI-473181">
        <id>Q99728</id>
    </interactant>
    <interactant intactId="EBI-4400025">
        <id>Q9Y2T1</id>
        <label>AXIN2</label>
    </interactant>
    <organismsDiffer>false</organismsDiffer>
    <experiments>3</experiments>
</comment>
<comment type="interaction">
    <interactant intactId="EBI-473181">
        <id>Q99728</id>
    </interactant>
    <interactant intactId="EBI-349905">
        <id>P38398</id>
        <label>BRCA1</label>
    </interactant>
    <organismsDiffer>false</organismsDiffer>
    <experiments>19</experiments>
</comment>
<comment type="interaction">
    <interactant intactId="EBI-473181">
        <id>Q99728</id>
    </interactant>
    <interactant intactId="EBI-21498346">
        <id>P38398-1</id>
        <label>BRCA1</label>
    </interactant>
    <organismsDiffer>false</organismsDiffer>
    <experiments>3</experiments>
</comment>
<comment type="interaction">
    <interactant intactId="EBI-473181">
        <id>Q99728</id>
    </interactant>
    <interactant intactId="EBI-473176">
        <id>Q9P2H0</id>
        <label>CEP126</label>
    </interactant>
    <organismsDiffer>false</organismsDiffer>
    <experiments>2</experiments>
</comment>
<comment type="interaction">
    <interactant intactId="EBI-473181">
        <id>Q99728</id>
    </interactant>
    <interactant intactId="EBI-739624">
        <id>Q8NHQ1</id>
        <label>CEP70</label>
    </interactant>
    <organismsDiffer>false</organismsDiffer>
    <experiments>3</experiments>
</comment>
<comment type="interaction">
    <interactant intactId="EBI-473181">
        <id>Q99728</id>
    </interactant>
    <interactant intactId="EBI-523590">
        <id>Q12873</id>
        <label>CHD3</label>
    </interactant>
    <organismsDiffer>false</organismsDiffer>
    <experiments>2</experiments>
</comment>
<comment type="interaction">
    <interactant intactId="EBI-473181">
        <id>Q99728</id>
    </interactant>
    <interactant intactId="EBI-1789619">
        <id>Q05048</id>
        <label>CSTF1</label>
    </interactant>
    <organismsDiffer>false</organismsDiffer>
    <experiments>4</experiments>
</comment>
<comment type="interaction">
    <interactant intactId="EBI-473181">
        <id>Q99728</id>
    </interactant>
    <interactant intactId="EBI-711360">
        <id>P33240</id>
        <label>CSTF2</label>
    </interactant>
    <organismsDiffer>false</organismsDiffer>
    <experiments>8</experiments>
</comment>
<comment type="interaction">
    <interactant intactId="EBI-473181">
        <id>Q99728</id>
    </interactant>
    <interactant intactId="EBI-949824">
        <id>O00471</id>
        <label>EXOC5</label>
    </interactant>
    <organismsDiffer>false</organismsDiffer>
    <experiments>3</experiments>
</comment>
<comment type="interaction">
    <interactant intactId="EBI-473181">
        <id>Q99728</id>
    </interactant>
    <interactant intactId="EBI-10175124">
        <id>Q8IZU0</id>
        <label>FAM9B</label>
    </interactant>
    <organismsDiffer>false</organismsDiffer>
    <experiments>3</experiments>
</comment>
<comment type="interaction">
    <interactant intactId="EBI-473181">
        <id>Q99728</id>
    </interactant>
    <interactant intactId="EBI-466061">
        <id>Q9Y2X7</id>
        <label>GIT1</label>
    </interactant>
    <organismsDiffer>false</organismsDiffer>
    <experiments>2</experiments>
</comment>
<comment type="interaction">
    <interactant intactId="EBI-473181">
        <id>Q99728</id>
    </interactant>
    <interactant intactId="EBI-618309">
        <id>Q08379</id>
        <label>GOLGA2</label>
    </interactant>
    <organismsDiffer>false</organismsDiffer>
    <experiments>6</experiments>
</comment>
<comment type="interaction">
    <interactant intactId="EBI-473181">
        <id>Q99728</id>
    </interactant>
    <interactant intactId="EBI-7116203">
        <id>O75031</id>
        <label>HSF2BP</label>
    </interactant>
    <organismsDiffer>false</organismsDiffer>
    <experiments>3</experiments>
</comment>
<comment type="interaction">
    <interactant intactId="EBI-473181">
        <id>Q99728</id>
    </interactant>
    <interactant intactId="EBI-11522367">
        <id>Q13422-7</id>
        <label>IKZF1</label>
    </interactant>
    <organismsDiffer>false</organismsDiffer>
    <experiments>3</experiments>
</comment>
<comment type="interaction">
    <interactant intactId="EBI-473181">
        <id>Q99728</id>
    </interactant>
    <interactant intactId="EBI-473199">
        <id>O95251</id>
        <label>KAT7</label>
    </interactant>
    <organismsDiffer>false</organismsDiffer>
    <experiments>2</experiments>
</comment>
<comment type="interaction">
    <interactant intactId="EBI-473181">
        <id>Q99728</id>
    </interactant>
    <interactant intactId="EBI-14069005">
        <id>Q9BVG8-5</id>
        <label>KIFC3</label>
    </interactant>
    <organismsDiffer>false</organismsDiffer>
    <experiments>3</experiments>
</comment>
<comment type="interaction">
    <interactant intactId="EBI-473181">
        <id>Q99728</id>
    </interactant>
    <interactant intactId="EBI-10171697">
        <id>Q6A162</id>
        <label>KRT40</label>
    </interactant>
    <organismsDiffer>false</organismsDiffer>
    <experiments>3</experiments>
</comment>
<comment type="interaction">
    <interactant intactId="EBI-473181">
        <id>Q99728</id>
    </interactant>
    <interactant intactId="EBI-740738">
        <id>O95751</id>
        <label>LDOC1</label>
    </interactant>
    <organismsDiffer>false</organismsDiffer>
    <experiments>7</experiments>
</comment>
<comment type="interaction">
    <interactant intactId="EBI-473181">
        <id>Q99728</id>
    </interactant>
    <interactant intactId="EBI-11522433">
        <id>Q5JR59-3</id>
        <label>MTUS2</label>
    </interactant>
    <organismsDiffer>false</organismsDiffer>
    <experiments>3</experiments>
</comment>
<comment type="interaction">
    <interactant intactId="EBI-473181">
        <id>Q99728</id>
    </interactant>
    <interactant intactId="EBI-372832">
        <id>O95453</id>
        <label>PARN</label>
    </interactant>
    <organismsDiffer>false</organismsDiffer>
    <experiments>4</experiments>
</comment>
<comment type="interaction">
    <interactant intactId="EBI-473181">
        <id>Q99728</id>
    </interactant>
    <interactant intactId="EBI-447043">
        <id>Q15276</id>
        <label>RABEP1</label>
    </interactant>
    <organismsDiffer>false</organismsDiffer>
    <experiments>3</experiments>
</comment>
<comment type="interaction">
    <interactant intactId="EBI-473181">
        <id>Q99728</id>
    </interactant>
    <interactant intactId="EBI-473271">
        <id>O14776</id>
        <label>TCERG1</label>
    </interactant>
    <organismsDiffer>false</organismsDiffer>
    <experiments>2</experiments>
</comment>
<comment type="interaction">
    <interactant intactId="EBI-473181">
        <id>Q99728</id>
    </interactant>
    <interactant intactId="EBI-359224">
        <id>Q13077</id>
        <label>TRAF1</label>
    </interactant>
    <organismsDiffer>false</organismsDiffer>
    <experiments>3</experiments>
</comment>
<comment type="interaction">
    <interactant intactId="EBI-473181">
        <id>Q99728</id>
    </interactant>
    <interactant intactId="EBI-625509">
        <id>Q8N720</id>
        <label>ZNF655</label>
    </interactant>
    <organismsDiffer>false</organismsDiffer>
    <experiments>3</experiments>
</comment>
<comment type="interaction">
    <interactant intactId="EBI-21498323">
        <id>Q99728-1</id>
    </interactant>
    <interactant intactId="EBI-714158">
        <id>Q13526</id>
        <label>PIN1</label>
    </interactant>
    <organismsDiffer>false</organismsDiffer>
    <experiments>4</experiments>
</comment>
<comment type="subcellular location">
    <subcellularLocation>
        <location>Nucleus</location>
    </subcellularLocation>
    <text>During S phase of the cell cycle, colocalizes with BRCA1 into discrete subnuclear foci. Can translocate to the cytoplasm. Localizes at sites of DNA damage at double-strand breaks (DSBs); recruitment to DNA damage sites is mediated by the BRCA1-A complex.</text>
</comment>
<comment type="alternative products">
    <event type="alternative splicing"/>
    <isoform>
        <id>Q99728-1</id>
        <name>1</name>
        <name>FL</name>
        <sequence type="displayed"/>
    </isoform>
    <isoform>
        <id>Q99728-2</id>
        <name>alpha</name>
        <sequence type="described" ref="VSP_055876"/>
    </isoform>
    <isoform>
        <id>Q99728-3</id>
        <name>beta</name>
        <sequence type="described" ref="VSP_055874 VSP_055875"/>
    </isoform>
    <isoform>
        <id>Q99728-4</id>
        <name>gamma</name>
        <sequence type="described" ref="VSP_055877 VSP_055878"/>
    </isoform>
</comment>
<comment type="PTM">
    <text>Processed during apoptosis. The homodimer is more susceptible to proteolytic cleavage than the BARD1/BRCA1 heterodimer.</text>
</comment>
<comment type="caution">
    <text evidence="13">It is uncertain whether Met-1 or Met-26 is the initiator.</text>
</comment>
<comment type="online information" name="Atlas of Genetics and Cytogenetics in Oncology and Haematology">
    <link uri="https://atlasgeneticsoncology.org/gene/756/BARD1"/>
</comment>
<feature type="chain" id="PRO_0000055819" description="BRCA1-associated RING domain protein 1">
    <location>
        <begin position="1"/>
        <end position="777"/>
    </location>
</feature>
<feature type="repeat" description="ANK 1">
    <location>
        <begin position="427"/>
        <end position="459"/>
    </location>
</feature>
<feature type="repeat" description="ANK 2">
    <location>
        <begin position="460"/>
        <end position="492"/>
    </location>
</feature>
<feature type="repeat" description="ANK 3">
    <location>
        <begin position="493"/>
        <end position="525"/>
    </location>
</feature>
<feature type="repeat" description="ANK 4; degenerate">
    <location>
        <begin position="526"/>
        <end position="546"/>
    </location>
</feature>
<feature type="domain" description="BRCT 1" evidence="1">
    <location>
        <begin position="560"/>
        <end position="653"/>
    </location>
</feature>
<feature type="domain" description="BRCT 2" evidence="1">
    <location>
        <begin position="667"/>
        <end position="777"/>
    </location>
</feature>
<feature type="zinc finger region" description="RING-type" evidence="2">
    <location>
        <begin position="50"/>
        <end position="87"/>
    </location>
</feature>
<feature type="region of interest" description="Disordered" evidence="3">
    <location>
        <begin position="1"/>
        <end position="32"/>
    </location>
</feature>
<feature type="region of interest" description="Interaction with BRCA1">
    <location>
        <begin position="26"/>
        <end position="119"/>
    </location>
</feature>
<feature type="region of interest" description="Disordered" evidence="3">
    <location>
        <begin position="167"/>
        <end position="211"/>
    </location>
</feature>
<feature type="region of interest" description="Disordered" evidence="3">
    <location>
        <begin position="356"/>
        <end position="404"/>
    </location>
</feature>
<feature type="region of interest" description="Flexible linker">
    <location>
        <begin position="554"/>
        <end position="558"/>
    </location>
</feature>
<feature type="compositionally biased region" description="Basic residues" evidence="3">
    <location>
        <begin position="197"/>
        <end position="209"/>
    </location>
</feature>
<feature type="compositionally biased region" description="Low complexity" evidence="3">
    <location>
        <begin position="389"/>
        <end position="404"/>
    </location>
</feature>
<feature type="modified residue" description="Phosphoserine" evidence="15">
    <location>
        <position position="186"/>
    </location>
</feature>
<feature type="modified residue" description="Phosphothreonine" evidence="15">
    <location>
        <position position="299"/>
    </location>
</feature>
<feature type="modified residue" description="Phosphoserine" evidence="14">
    <location>
        <position position="391"/>
    </location>
</feature>
<feature type="modified residue" description="Phosphothreonine" evidence="14">
    <location>
        <position position="394"/>
    </location>
</feature>
<feature type="cross-link" description="Glycyl lysine isopeptide (Lys-Gly) (interchain with G-Cter in SUMO2)" evidence="17">
    <location>
        <position position="160"/>
    </location>
</feature>
<feature type="cross-link" description="Glycyl lysine isopeptide (Lys-Gly) (interchain with G-Cter in SUMO2)" evidence="16 17">
    <location>
        <position position="170"/>
    </location>
</feature>
<feature type="cross-link" description="Glycyl lysine isopeptide (Lys-Gly) (interchain with G-Cter in SUMO2)" evidence="17">
    <location>
        <position position="423"/>
    </location>
</feature>
<feature type="cross-link" description="Glycyl lysine isopeptide (Lys-Gly) (interchain with G-Cter in SUMO2)" evidence="17">
    <location>
        <position position="548"/>
    </location>
</feature>
<feature type="splice variant" id="VSP_055874" description="In isoform beta." evidence="12">
    <original>MPDNRQPRNRQPRIRSGNEPRSAP</original>
    <variation>MVAVPGPTVAPRSTAWRSCCAARV</variation>
    <location>
        <begin position="1"/>
        <end position="24"/>
    </location>
</feature>
<feature type="splice variant" id="VSP_055875" description="In isoform beta." evidence="12">
    <location>
        <begin position="25"/>
        <end position="121"/>
    </location>
</feature>
<feature type="splice variant" id="VSP_055876" description="In isoform alpha." evidence="12">
    <location>
        <begin position="54"/>
        <end position="72"/>
    </location>
</feature>
<feature type="splice variant" id="VSP_055877" description="In isoform gamma." evidence="12">
    <original>DLKEDK</original>
    <variation>GRHTFC</variation>
    <location>
        <begin position="122"/>
        <end position="127"/>
    </location>
</feature>
<feature type="splice variant" id="VSP_055878" description="In isoform gamma." evidence="12">
    <location>
        <begin position="128"/>
        <end position="777"/>
    </location>
</feature>
<feature type="sequence variant" id="VAR_010354" description="In dbSNP:rs1048108." evidence="11">
    <original>P</original>
    <variation>S</variation>
    <location>
        <position position="24"/>
    </location>
</feature>
<feature type="sequence variant" id="VAR_010355" description="In dbSNP:rs753377280." evidence="11">
    <original>K</original>
    <variation>E</variation>
    <location>
        <position position="153"/>
    </location>
</feature>
<feature type="sequence variant" id="VAR_038371" description="In dbSNP:rs16852741.">
    <original>S</original>
    <variation>G</variation>
    <location>
        <position position="186"/>
    </location>
</feature>
<feature type="sequence variant" id="VAR_020109" description="In dbSNP:rs3738885.">
    <original>S</original>
    <variation>C</variation>
    <location>
        <position position="241"/>
    </location>
</feature>
<feature type="sequence variant" id="VAR_024611" description="In dbSNP:rs2229571." evidence="11">
    <original>R</original>
    <variation>S</variation>
    <location>
        <position position="378"/>
    </location>
</feature>
<feature type="sequence variant" id="VAR_010356" description="In dbSNP:rs2070094." evidence="11">
    <original>V</original>
    <variation>M</variation>
    <location>
        <position position="507"/>
    </location>
</feature>
<feature type="sequence variant" id="VAR_010357" description="In dbSNP:rs28997576." evidence="11">
    <original>C</original>
    <variation>S</variation>
    <location>
        <position position="557"/>
    </location>
</feature>
<feature type="sequence variant" id="VAR_010358" description="In an ovarian clear cell adenocarcinoma; dbSNP:rs1168537193." evidence="11">
    <original>Q</original>
    <variation>H</variation>
    <location>
        <position position="564"/>
    </location>
</feature>
<feature type="sequence variant" id="VAR_038372" description="In dbSNP:rs2228456.">
    <original>C</original>
    <variation>R</variation>
    <location>
        <position position="645"/>
    </location>
</feature>
<feature type="sequence variant" id="VAR_010359" description="In dbSNP:rs3738888." evidence="11">
    <original>R</original>
    <variation>C</variation>
    <location>
        <position position="658"/>
    </location>
</feature>
<feature type="sequence variant" id="VAR_010360" description="In a breast cancer sample; somatic mutation; dbSNP:rs111367604." evidence="11">
    <original>V</original>
    <variation>L</variation>
    <location>
        <position position="695"/>
    </location>
</feature>
<feature type="sequence variant" id="VAR_028309" description="In dbSNP:rs13389423.">
    <original>S</original>
    <variation>F</variation>
    <location>
        <position position="728"/>
    </location>
</feature>
<feature type="sequence variant" id="VAR_010361" description="In an uterine cancer sample; somatic mutation; dbSNP:rs142155101." evidence="11">
    <original>S</original>
    <variation>N</variation>
    <location>
        <position position="761"/>
    </location>
</feature>
<feature type="sequence conflict" description="In Ref. 3; AEF57473." evidence="13" ref="3">
    <original>V</original>
    <variation>A</variation>
    <location>
        <position position="85"/>
    </location>
</feature>
<feature type="sequence conflict" description="In Ref. 1; AAB38316 and 3; AEF57471/AEF57472." evidence="13" ref="1 3">
    <original>R</original>
    <variation>Q</variation>
    <location>
        <position position="406"/>
    </location>
</feature>
<feature type="helix" evidence="21">
    <location>
        <begin position="35"/>
        <end position="45"/>
    </location>
</feature>
<feature type="turn" evidence="21">
    <location>
        <begin position="51"/>
        <end position="53"/>
    </location>
</feature>
<feature type="strand" evidence="21">
    <location>
        <begin position="58"/>
        <end position="61"/>
    </location>
</feature>
<feature type="strand" evidence="21">
    <location>
        <begin position="64"/>
        <end position="67"/>
    </location>
</feature>
<feature type="helix" evidence="21">
    <location>
        <begin position="72"/>
        <end position="75"/>
    </location>
</feature>
<feature type="turn" evidence="21">
    <location>
        <begin position="78"/>
        <end position="81"/>
    </location>
</feature>
<feature type="turn" evidence="21">
    <location>
        <begin position="84"/>
        <end position="86"/>
    </location>
</feature>
<feature type="helix" evidence="21">
    <location>
        <begin position="99"/>
        <end position="115"/>
    </location>
</feature>
<feature type="helix" evidence="19">
    <location>
        <begin position="431"/>
        <end position="438"/>
    </location>
</feature>
<feature type="helix" evidence="19">
    <location>
        <begin position="441"/>
        <end position="449"/>
    </location>
</feature>
<feature type="strand" evidence="22">
    <location>
        <begin position="459"/>
        <end position="461"/>
    </location>
</feature>
<feature type="helix" evidence="19">
    <location>
        <begin position="464"/>
        <end position="470"/>
    </location>
</feature>
<feature type="helix" evidence="19">
    <location>
        <begin position="474"/>
        <end position="482"/>
    </location>
</feature>
<feature type="helix" evidence="19">
    <location>
        <begin position="492"/>
        <end position="494"/>
    </location>
</feature>
<feature type="helix" evidence="19">
    <location>
        <begin position="497"/>
        <end position="503"/>
    </location>
</feature>
<feature type="helix" evidence="19">
    <location>
        <begin position="507"/>
        <end position="515"/>
    </location>
</feature>
<feature type="helix" evidence="19">
    <location>
        <begin position="530"/>
        <end position="533"/>
    </location>
</feature>
<feature type="helix" evidence="19">
    <location>
        <begin position="537"/>
        <end position="543"/>
    </location>
</feature>
<feature type="strand" evidence="20">
    <location>
        <begin position="571"/>
        <end position="576"/>
    </location>
</feature>
<feature type="helix" evidence="20">
    <location>
        <begin position="579"/>
        <end position="591"/>
    </location>
</feature>
<feature type="strand" evidence="18">
    <location>
        <begin position="595"/>
        <end position="599"/>
    </location>
</feature>
<feature type="strand" evidence="20">
    <location>
        <begin position="606"/>
        <end position="613"/>
    </location>
</feature>
<feature type="helix" evidence="20">
    <location>
        <begin position="618"/>
        <end position="625"/>
    </location>
</feature>
<feature type="strand" evidence="20">
    <location>
        <begin position="629"/>
        <end position="632"/>
    </location>
</feature>
<feature type="helix" evidence="20">
    <location>
        <begin position="634"/>
        <end position="642"/>
    </location>
</feature>
<feature type="helix" evidence="20">
    <location>
        <begin position="648"/>
        <end position="651"/>
    </location>
</feature>
<feature type="helix" evidence="20">
    <location>
        <begin position="656"/>
        <end position="665"/>
    </location>
</feature>
<feature type="turn" evidence="20">
    <location>
        <begin position="671"/>
        <end position="674"/>
    </location>
</feature>
<feature type="strand" evidence="20">
    <location>
        <begin position="676"/>
        <end position="679"/>
    </location>
</feature>
<feature type="strand" evidence="20">
    <location>
        <begin position="684"/>
        <end position="686"/>
    </location>
</feature>
<feature type="helix" evidence="20">
    <location>
        <begin position="688"/>
        <end position="697"/>
    </location>
</feature>
<feature type="strand" evidence="18">
    <location>
        <begin position="701"/>
        <end position="705"/>
    </location>
</feature>
<feature type="helix" evidence="18">
    <location>
        <begin position="709"/>
        <end position="711"/>
    </location>
</feature>
<feature type="helix" evidence="20">
    <location>
        <begin position="712"/>
        <end position="716"/>
    </location>
</feature>
<feature type="helix" evidence="20">
    <location>
        <begin position="729"/>
        <end position="731"/>
    </location>
</feature>
<feature type="strand" evidence="20">
    <location>
        <begin position="735"/>
        <end position="739"/>
    </location>
</feature>
<feature type="strand" evidence="20">
    <location>
        <begin position="741"/>
        <end position="744"/>
    </location>
</feature>
<feature type="strand" evidence="20">
    <location>
        <begin position="748"/>
        <end position="752"/>
    </location>
</feature>
<feature type="strand" evidence="20">
    <location>
        <begin position="755"/>
        <end position="759"/>
    </location>
</feature>
<feature type="helix" evidence="20">
    <location>
        <begin position="760"/>
        <end position="769"/>
    </location>
</feature>
<accession>Q99728</accession>
<accession>F6MDH7</accession>
<accession>F6MDH8</accession>
<accession>F6MDH9</accession>
<accession>O43574</accession>
<accession>Q53SS5</accession>